<evidence type="ECO:0000255" key="1">
    <source>
        <dbReference type="HAMAP-Rule" id="MF_01356"/>
    </source>
</evidence>
<evidence type="ECO:0000305" key="2"/>
<comment type="function">
    <text evidence="1">NDH shuttles electrons from NAD(P)H:plastoquinone, via FMN and iron-sulfur (Fe-S) centers, to quinones in the photosynthetic chain and possibly in a chloroplast respiratory chain. The immediate electron acceptor for the enzyme in this species is believed to be plastoquinone. Couples the redox reaction to proton translocation, and thus conserves the redox energy in a proton gradient.</text>
</comment>
<comment type="catalytic activity">
    <reaction evidence="1">
        <text>a plastoquinone + NADH + (n+1) H(+)(in) = a plastoquinol + NAD(+) + n H(+)(out)</text>
        <dbReference type="Rhea" id="RHEA:42608"/>
        <dbReference type="Rhea" id="RHEA-COMP:9561"/>
        <dbReference type="Rhea" id="RHEA-COMP:9562"/>
        <dbReference type="ChEBI" id="CHEBI:15378"/>
        <dbReference type="ChEBI" id="CHEBI:17757"/>
        <dbReference type="ChEBI" id="CHEBI:57540"/>
        <dbReference type="ChEBI" id="CHEBI:57945"/>
        <dbReference type="ChEBI" id="CHEBI:62192"/>
    </reaction>
</comment>
<comment type="catalytic activity">
    <reaction evidence="1">
        <text>a plastoquinone + NADPH + (n+1) H(+)(in) = a plastoquinol + NADP(+) + n H(+)(out)</text>
        <dbReference type="Rhea" id="RHEA:42612"/>
        <dbReference type="Rhea" id="RHEA-COMP:9561"/>
        <dbReference type="Rhea" id="RHEA-COMP:9562"/>
        <dbReference type="ChEBI" id="CHEBI:15378"/>
        <dbReference type="ChEBI" id="CHEBI:17757"/>
        <dbReference type="ChEBI" id="CHEBI:57783"/>
        <dbReference type="ChEBI" id="CHEBI:58349"/>
        <dbReference type="ChEBI" id="CHEBI:62192"/>
    </reaction>
</comment>
<comment type="cofactor">
    <cofactor evidence="1">
        <name>[4Fe-4S] cluster</name>
        <dbReference type="ChEBI" id="CHEBI:49883"/>
    </cofactor>
    <text evidence="1">Binds 1 [4Fe-4S] cluster.</text>
</comment>
<comment type="subunit">
    <text evidence="1">NDH is composed of at least 16 different subunits, 5 of which are encoded in the nucleus.</text>
</comment>
<comment type="subcellular location">
    <subcellularLocation>
        <location evidence="1">Plastid</location>
        <location evidence="1">Chloroplast thylakoid membrane</location>
        <topology evidence="1">Peripheral membrane protein</topology>
        <orientation evidence="1">Stromal side</orientation>
    </subcellularLocation>
</comment>
<comment type="similarity">
    <text evidence="1">Belongs to the complex I 20 kDa subunit family.</text>
</comment>
<comment type="sequence caution" evidence="2">
    <conflict type="erroneous initiation">
        <sequence resource="EMBL-CDS" id="CAF28597"/>
    </conflict>
</comment>
<dbReference type="EC" id="7.1.1.-" evidence="1"/>
<dbReference type="EMBL" id="AJ627251">
    <property type="protein sequence ID" value="CAF28597.1"/>
    <property type="status" value="ALT_INIT"/>
    <property type="molecule type" value="Genomic_DNA"/>
</dbReference>
<dbReference type="RefSeq" id="YP_053159.2">
    <property type="nucleotide sequence ID" value="NC_006050.1"/>
</dbReference>
<dbReference type="SMR" id="Q6EW44"/>
<dbReference type="GeneID" id="2896223"/>
<dbReference type="GO" id="GO:0009535">
    <property type="term" value="C:chloroplast thylakoid membrane"/>
    <property type="evidence" value="ECO:0007669"/>
    <property type="project" value="UniProtKB-SubCell"/>
</dbReference>
<dbReference type="GO" id="GO:0045271">
    <property type="term" value="C:respiratory chain complex I"/>
    <property type="evidence" value="ECO:0007669"/>
    <property type="project" value="TreeGrafter"/>
</dbReference>
<dbReference type="GO" id="GO:0051539">
    <property type="term" value="F:4 iron, 4 sulfur cluster binding"/>
    <property type="evidence" value="ECO:0007669"/>
    <property type="project" value="UniProtKB-KW"/>
</dbReference>
<dbReference type="GO" id="GO:0005506">
    <property type="term" value="F:iron ion binding"/>
    <property type="evidence" value="ECO:0007669"/>
    <property type="project" value="UniProtKB-UniRule"/>
</dbReference>
<dbReference type="GO" id="GO:0008137">
    <property type="term" value="F:NADH dehydrogenase (ubiquinone) activity"/>
    <property type="evidence" value="ECO:0007669"/>
    <property type="project" value="InterPro"/>
</dbReference>
<dbReference type="GO" id="GO:0048038">
    <property type="term" value="F:quinone binding"/>
    <property type="evidence" value="ECO:0007669"/>
    <property type="project" value="UniProtKB-KW"/>
</dbReference>
<dbReference type="GO" id="GO:0009060">
    <property type="term" value="P:aerobic respiration"/>
    <property type="evidence" value="ECO:0007669"/>
    <property type="project" value="TreeGrafter"/>
</dbReference>
<dbReference type="GO" id="GO:0015990">
    <property type="term" value="P:electron transport coupled proton transport"/>
    <property type="evidence" value="ECO:0007669"/>
    <property type="project" value="TreeGrafter"/>
</dbReference>
<dbReference type="GO" id="GO:0019684">
    <property type="term" value="P:photosynthesis, light reaction"/>
    <property type="evidence" value="ECO:0007669"/>
    <property type="project" value="UniProtKB-UniRule"/>
</dbReference>
<dbReference type="FunFam" id="3.40.50.12280:FF:000003">
    <property type="entry name" value="NAD(P)H-quinone oxidoreductase subunit K, chloroplastic"/>
    <property type="match status" value="1"/>
</dbReference>
<dbReference type="Gene3D" id="3.40.50.12280">
    <property type="match status" value="1"/>
</dbReference>
<dbReference type="HAMAP" id="MF_01356">
    <property type="entry name" value="NDH1_NuoB"/>
    <property type="match status" value="1"/>
</dbReference>
<dbReference type="InterPro" id="IPR006137">
    <property type="entry name" value="NADH_UbQ_OxRdtase-like_20kDa"/>
</dbReference>
<dbReference type="InterPro" id="IPR006138">
    <property type="entry name" value="NADH_UQ_OxRdtase_20Kd_su"/>
</dbReference>
<dbReference type="NCBIfam" id="TIGR01957">
    <property type="entry name" value="nuoB_fam"/>
    <property type="match status" value="1"/>
</dbReference>
<dbReference type="NCBIfam" id="NF005012">
    <property type="entry name" value="PRK06411.1"/>
    <property type="match status" value="1"/>
</dbReference>
<dbReference type="PANTHER" id="PTHR11995">
    <property type="entry name" value="NADH DEHYDROGENASE"/>
    <property type="match status" value="1"/>
</dbReference>
<dbReference type="PANTHER" id="PTHR11995:SF14">
    <property type="entry name" value="NADH DEHYDROGENASE [UBIQUINONE] IRON-SULFUR PROTEIN 7, MITOCHONDRIAL"/>
    <property type="match status" value="1"/>
</dbReference>
<dbReference type="Pfam" id="PF01058">
    <property type="entry name" value="Oxidored_q6"/>
    <property type="match status" value="1"/>
</dbReference>
<dbReference type="SUPFAM" id="SSF56770">
    <property type="entry name" value="HydA/Nqo6-like"/>
    <property type="match status" value="1"/>
</dbReference>
<dbReference type="PROSITE" id="PS01150">
    <property type="entry name" value="COMPLEX1_20K"/>
    <property type="match status" value="1"/>
</dbReference>
<feature type="chain" id="PRO_0000358566" description="NAD(P)H-quinone oxidoreductase subunit K, chloroplastic">
    <location>
        <begin position="1"/>
        <end position="225"/>
    </location>
</feature>
<feature type="binding site" evidence="1">
    <location>
        <position position="43"/>
    </location>
    <ligand>
        <name>[4Fe-4S] cluster</name>
        <dbReference type="ChEBI" id="CHEBI:49883"/>
    </ligand>
</feature>
<feature type="binding site" evidence="1">
    <location>
        <position position="44"/>
    </location>
    <ligand>
        <name>[4Fe-4S] cluster</name>
        <dbReference type="ChEBI" id="CHEBI:49883"/>
    </ligand>
</feature>
<feature type="binding site" evidence="1">
    <location>
        <position position="108"/>
    </location>
    <ligand>
        <name>[4Fe-4S] cluster</name>
        <dbReference type="ChEBI" id="CHEBI:49883"/>
    </ligand>
</feature>
<feature type="binding site" evidence="1">
    <location>
        <position position="139"/>
    </location>
    <ligand>
        <name>[4Fe-4S] cluster</name>
        <dbReference type="ChEBI" id="CHEBI:49883"/>
    </ligand>
</feature>
<reference key="1">
    <citation type="journal article" date="2004" name="Mol. Biol. Evol.">
        <title>The chloroplast genome of Nymphaea alba: whole-genome analyses and the problem of identifying the most basal angiosperm.</title>
        <authorList>
            <person name="Goremykin V.V."/>
            <person name="Hirsch-Ernst K.I."/>
            <person name="Woelfl S."/>
            <person name="Hellwig F.H."/>
        </authorList>
    </citation>
    <scope>NUCLEOTIDE SEQUENCE [LARGE SCALE GENOMIC DNA]</scope>
</reference>
<proteinExistence type="inferred from homology"/>
<protein>
    <recommendedName>
        <fullName evidence="1">NAD(P)H-quinone oxidoreductase subunit K, chloroplastic</fullName>
        <ecNumber evidence="1">7.1.1.-</ecNumber>
    </recommendedName>
    <alternativeName>
        <fullName evidence="1">NAD(P)H dehydrogenase subunit K</fullName>
    </alternativeName>
    <alternativeName>
        <fullName evidence="1">NADH-plastoquinone oxidoreductase subunit K</fullName>
    </alternativeName>
</protein>
<accession>Q6EW44</accession>
<organism>
    <name type="scientific">Nymphaea alba</name>
    <name type="common">White water-lily</name>
    <name type="synonym">Castalia alba</name>
    <dbReference type="NCBI Taxonomy" id="34301"/>
    <lineage>
        <taxon>Eukaryota</taxon>
        <taxon>Viridiplantae</taxon>
        <taxon>Streptophyta</taxon>
        <taxon>Embryophyta</taxon>
        <taxon>Tracheophyta</taxon>
        <taxon>Spermatophyta</taxon>
        <taxon>Magnoliopsida</taxon>
        <taxon>Nymphaeales</taxon>
        <taxon>Nymphaeaceae</taxon>
        <taxon>Nymphaea</taxon>
    </lineage>
</organism>
<gene>
    <name evidence="1" type="primary">ndhK</name>
</gene>
<sequence>MNSMEFPLFDRTTPNSVISTTLNDLSNWSRLSSLWPLLYGTSCCFIEFASLIGSRFDFDRYGLVPRSSPRQADLILTAGTVTMKMAPSLVRLYEQMPEPKYVIAMGACTITGGMFSTDSYSTVRGVDKLIPVDVYLPGCPPKPEAIIDAITKLRKKVSREIYEDRTGSQQENRCFTTNHKFHLGRSTRAVNYDQGLLYQSTSTSEIPSEAFFKYKSSVSSHELVN</sequence>
<keyword id="KW-0004">4Fe-4S</keyword>
<keyword id="KW-0150">Chloroplast</keyword>
<keyword id="KW-0408">Iron</keyword>
<keyword id="KW-0411">Iron-sulfur</keyword>
<keyword id="KW-0472">Membrane</keyword>
<keyword id="KW-0479">Metal-binding</keyword>
<keyword id="KW-0520">NAD</keyword>
<keyword id="KW-0521">NADP</keyword>
<keyword id="KW-0934">Plastid</keyword>
<keyword id="KW-0618">Plastoquinone</keyword>
<keyword id="KW-0874">Quinone</keyword>
<keyword id="KW-0793">Thylakoid</keyword>
<keyword id="KW-1278">Translocase</keyword>
<keyword id="KW-0813">Transport</keyword>
<name>NDHK_NYMAL</name>
<geneLocation type="chloroplast"/>